<feature type="chain" id="PRO_0000399758" description="Autophagy-related protein 32">
    <location>
        <begin position="1"/>
        <end position="524"/>
    </location>
</feature>
<feature type="transmembrane region" description="Helical" evidence="2">
    <location>
        <begin position="396"/>
        <end position="416"/>
    </location>
</feature>
<feature type="region of interest" description="Disordered" evidence="3">
    <location>
        <begin position="1"/>
        <end position="37"/>
    </location>
</feature>
<feature type="region of interest" description="Disordered" evidence="3">
    <location>
        <begin position="165"/>
        <end position="196"/>
    </location>
</feature>
<feature type="compositionally biased region" description="Low complexity" evidence="3">
    <location>
        <begin position="24"/>
        <end position="36"/>
    </location>
</feature>
<feature type="compositionally biased region" description="Polar residues" evidence="3">
    <location>
        <begin position="165"/>
        <end position="183"/>
    </location>
</feature>
<protein>
    <recommendedName>
        <fullName>Autophagy-related protein 32</fullName>
    </recommendedName>
</protein>
<evidence type="ECO:0000250" key="1"/>
<evidence type="ECO:0000255" key="2"/>
<evidence type="ECO:0000256" key="3">
    <source>
        <dbReference type="SAM" id="MobiDB-lite"/>
    </source>
</evidence>
<evidence type="ECO:0000305" key="4"/>
<keyword id="KW-0072">Autophagy</keyword>
<keyword id="KW-0472">Membrane</keyword>
<keyword id="KW-0496">Mitochondrion</keyword>
<keyword id="KW-1000">Mitochondrion outer membrane</keyword>
<keyword id="KW-1185">Reference proteome</keyword>
<keyword id="KW-0812">Transmembrane</keyword>
<keyword id="KW-1133">Transmembrane helix</keyword>
<keyword id="KW-0926">Vacuole</keyword>
<organism>
    <name type="scientific">Kluyveromyces lactis (strain ATCC 8585 / CBS 2359 / DSM 70799 / NBRC 1267 / NRRL Y-1140 / WM37)</name>
    <name type="common">Yeast</name>
    <name type="synonym">Candida sphaerica</name>
    <dbReference type="NCBI Taxonomy" id="284590"/>
    <lineage>
        <taxon>Eukaryota</taxon>
        <taxon>Fungi</taxon>
        <taxon>Dikarya</taxon>
        <taxon>Ascomycota</taxon>
        <taxon>Saccharomycotina</taxon>
        <taxon>Saccharomycetes</taxon>
        <taxon>Saccharomycetales</taxon>
        <taxon>Saccharomycetaceae</taxon>
        <taxon>Kluyveromyces</taxon>
    </lineage>
</organism>
<dbReference type="EMBL" id="CR382121">
    <property type="protein sequence ID" value="CAH02615.1"/>
    <property type="molecule type" value="Genomic_DNA"/>
</dbReference>
<dbReference type="RefSeq" id="XP_451027.1">
    <property type="nucleotide sequence ID" value="XM_451027.1"/>
</dbReference>
<dbReference type="SMR" id="Q6CYG2"/>
<dbReference type="FunCoup" id="Q6CYG2">
    <property type="interactions" value="69"/>
</dbReference>
<dbReference type="STRING" id="284590.Q6CYG2"/>
<dbReference type="PaxDb" id="284590-Q6CYG2"/>
<dbReference type="KEGG" id="kla:KLLA0_A00660g"/>
<dbReference type="eggNOG" id="ENOG502QY5V">
    <property type="taxonomic scope" value="Eukaryota"/>
</dbReference>
<dbReference type="HOGENOM" id="CLU_039418_0_0_1"/>
<dbReference type="InParanoid" id="Q6CYG2"/>
<dbReference type="OMA" id="IPICQPG"/>
<dbReference type="Proteomes" id="UP000000598">
    <property type="component" value="Chromosome A"/>
</dbReference>
<dbReference type="GO" id="GO:0005741">
    <property type="term" value="C:mitochondrial outer membrane"/>
    <property type="evidence" value="ECO:0007669"/>
    <property type="project" value="UniProtKB-SubCell"/>
</dbReference>
<dbReference type="GO" id="GO:0034045">
    <property type="term" value="C:phagophore assembly site membrane"/>
    <property type="evidence" value="ECO:0007669"/>
    <property type="project" value="UniProtKB-SubCell"/>
</dbReference>
<dbReference type="GO" id="GO:0005774">
    <property type="term" value="C:vacuolar membrane"/>
    <property type="evidence" value="ECO:0007669"/>
    <property type="project" value="UniProtKB-SubCell"/>
</dbReference>
<dbReference type="GO" id="GO:0006914">
    <property type="term" value="P:autophagy"/>
    <property type="evidence" value="ECO:0007669"/>
    <property type="project" value="UniProtKB-KW"/>
</dbReference>
<dbReference type="CDD" id="cd19929">
    <property type="entry name" value="psREC_Atg32"/>
    <property type="match status" value="1"/>
</dbReference>
<proteinExistence type="inferred from homology"/>
<sequence>MSGSKGVWGAPPGNNNRQLYSLDAGSSGSGVSASSAQRHSILDPHDSVMDLLNGQQSCAFDSRLIQNQDLIDRKGKSNNIDHNDINTHTHSKGLTDSWQAIDRDEYSFLNAGNHNNYHNTSNGDFNQQFGGVLSSDTSEEEVEINAAPSPNLSASQQHNQFLAYPLSSTGFGDQGNSETTVHQFSDGDPVKSTKTGQFSKAELGAGTGEDETIMVNLGHSWAGSFFVMPKLSLSESMKRFKILILSDGDSANSFYNRLSRYHRLMFDVGKLNEASKEEALKYTAFMIIFSDSKKVTTILNRMWKKYGDFTLIPICQKGQKQSVTEKVKTFANSNKIKLMSYPVVISDHYEIHGLLRHLHSLYVEVDSDYETDIPKKTKPRKGAKKKPAPHLAKRWWFWPISIALGVGIGCCVTFYFSKFETSSYNSSVGVIQTADKEIDAIVDAIEGNSPSILEESSPQSISDFLGQVCKLVKDTAIQINELLKQFLSAHLMTSAWIQSIGKEFMQPDSQSTISKVTALDLVMF</sequence>
<comment type="function">
    <text evidence="1">Mitophagy-specific receptor that recruits the autophagic machinery to mitochondria and regulates selective degradation of mitochondria. Mitophagy contributes to regulate mitochondrial quantity and quality by eliminating the mitochondria to a basal level to fulfill cellular energy requirements and preventing excess ROS production. Recruits ATG11 to the surface of mitochondria. Also promotes autophagy-dependent peroxisome degradation (By similarity).</text>
</comment>
<comment type="subcellular location">
    <subcellularLocation>
        <location evidence="1">Mitochondrion outer membrane</location>
        <topology evidence="1">Single-pass membrane protein</topology>
    </subcellularLocation>
    <subcellularLocation>
        <location evidence="1">Vacuole membrane</location>
        <topology evidence="1">Single-pass membrane protein</topology>
    </subcellularLocation>
    <subcellularLocation>
        <location evidence="1">Preautophagosomal structure membrane</location>
        <topology evidence="1">Single-pass membrane protein</topology>
    </subcellularLocation>
    <text evidence="1">Is recruited to the preautophagosomal structure during mitophagy and imported into the vacuole along with mitochondria during starvation.</text>
</comment>
<comment type="similarity">
    <text evidence="4">Belongs to the ATG32 family.</text>
</comment>
<reference key="1">
    <citation type="journal article" date="2004" name="Nature">
        <title>Genome evolution in yeasts.</title>
        <authorList>
            <person name="Dujon B."/>
            <person name="Sherman D."/>
            <person name="Fischer G."/>
            <person name="Durrens P."/>
            <person name="Casaregola S."/>
            <person name="Lafontaine I."/>
            <person name="de Montigny J."/>
            <person name="Marck C."/>
            <person name="Neuveglise C."/>
            <person name="Talla E."/>
            <person name="Goffard N."/>
            <person name="Frangeul L."/>
            <person name="Aigle M."/>
            <person name="Anthouard V."/>
            <person name="Babour A."/>
            <person name="Barbe V."/>
            <person name="Barnay S."/>
            <person name="Blanchin S."/>
            <person name="Beckerich J.-M."/>
            <person name="Beyne E."/>
            <person name="Bleykasten C."/>
            <person name="Boisrame A."/>
            <person name="Boyer J."/>
            <person name="Cattolico L."/>
            <person name="Confanioleri F."/>
            <person name="de Daruvar A."/>
            <person name="Despons L."/>
            <person name="Fabre E."/>
            <person name="Fairhead C."/>
            <person name="Ferry-Dumazet H."/>
            <person name="Groppi A."/>
            <person name="Hantraye F."/>
            <person name="Hennequin C."/>
            <person name="Jauniaux N."/>
            <person name="Joyet P."/>
            <person name="Kachouri R."/>
            <person name="Kerrest A."/>
            <person name="Koszul R."/>
            <person name="Lemaire M."/>
            <person name="Lesur I."/>
            <person name="Ma L."/>
            <person name="Muller H."/>
            <person name="Nicaud J.-M."/>
            <person name="Nikolski M."/>
            <person name="Oztas S."/>
            <person name="Ozier-Kalogeropoulos O."/>
            <person name="Pellenz S."/>
            <person name="Potier S."/>
            <person name="Richard G.-F."/>
            <person name="Straub M.-L."/>
            <person name="Suleau A."/>
            <person name="Swennen D."/>
            <person name="Tekaia F."/>
            <person name="Wesolowski-Louvel M."/>
            <person name="Westhof E."/>
            <person name="Wirth B."/>
            <person name="Zeniou-Meyer M."/>
            <person name="Zivanovic Y."/>
            <person name="Bolotin-Fukuhara M."/>
            <person name="Thierry A."/>
            <person name="Bouchier C."/>
            <person name="Caudron B."/>
            <person name="Scarpelli C."/>
            <person name="Gaillardin C."/>
            <person name="Weissenbach J."/>
            <person name="Wincker P."/>
            <person name="Souciet J.-L."/>
        </authorList>
    </citation>
    <scope>NUCLEOTIDE SEQUENCE [LARGE SCALE GENOMIC DNA]</scope>
    <source>
        <strain>ATCC 8585 / CBS 2359 / DSM 70799 / NBRC 1267 / NRRL Y-1140 / WM37</strain>
    </source>
</reference>
<name>ATG32_KLULA</name>
<accession>Q6CYG2</accession>
<gene>
    <name type="primary">ATG32</name>
    <name type="ordered locus">KLLA0A00660g</name>
</gene>